<dbReference type="EC" id="3.5.1.5" evidence="1"/>
<dbReference type="EMBL" id="AE017194">
    <property type="protein sequence ID" value="AAS42569.1"/>
    <property type="molecule type" value="Genomic_DNA"/>
</dbReference>
<dbReference type="SMR" id="Q733J4"/>
<dbReference type="KEGG" id="bca:BCE_3664"/>
<dbReference type="HOGENOM" id="CLU_145825_1_0_9"/>
<dbReference type="UniPathway" id="UPA00258">
    <property type="reaction ID" value="UER00370"/>
</dbReference>
<dbReference type="Proteomes" id="UP000002527">
    <property type="component" value="Chromosome"/>
</dbReference>
<dbReference type="GO" id="GO:0005737">
    <property type="term" value="C:cytoplasm"/>
    <property type="evidence" value="ECO:0007669"/>
    <property type="project" value="UniProtKB-SubCell"/>
</dbReference>
<dbReference type="GO" id="GO:0016151">
    <property type="term" value="F:nickel cation binding"/>
    <property type="evidence" value="ECO:0007669"/>
    <property type="project" value="InterPro"/>
</dbReference>
<dbReference type="GO" id="GO:0009039">
    <property type="term" value="F:urease activity"/>
    <property type="evidence" value="ECO:0007669"/>
    <property type="project" value="UniProtKB-UniRule"/>
</dbReference>
<dbReference type="GO" id="GO:0043419">
    <property type="term" value="P:urea catabolic process"/>
    <property type="evidence" value="ECO:0007669"/>
    <property type="project" value="UniProtKB-UniRule"/>
</dbReference>
<dbReference type="CDD" id="cd00390">
    <property type="entry name" value="Urease_gamma"/>
    <property type="match status" value="1"/>
</dbReference>
<dbReference type="Gene3D" id="3.30.280.10">
    <property type="entry name" value="Urease, gamma-like subunit"/>
    <property type="match status" value="1"/>
</dbReference>
<dbReference type="HAMAP" id="MF_00739">
    <property type="entry name" value="Urease_gamma"/>
    <property type="match status" value="1"/>
</dbReference>
<dbReference type="InterPro" id="IPR012010">
    <property type="entry name" value="Urease_gamma"/>
</dbReference>
<dbReference type="InterPro" id="IPR002026">
    <property type="entry name" value="Urease_gamma/gamma-beta_su"/>
</dbReference>
<dbReference type="InterPro" id="IPR036463">
    <property type="entry name" value="Urease_gamma_sf"/>
</dbReference>
<dbReference type="InterPro" id="IPR050069">
    <property type="entry name" value="Urease_subunit"/>
</dbReference>
<dbReference type="NCBIfam" id="NF009712">
    <property type="entry name" value="PRK13241.1"/>
    <property type="match status" value="1"/>
</dbReference>
<dbReference type="NCBIfam" id="TIGR00193">
    <property type="entry name" value="urease_gam"/>
    <property type="match status" value="1"/>
</dbReference>
<dbReference type="PANTHER" id="PTHR33569">
    <property type="entry name" value="UREASE"/>
    <property type="match status" value="1"/>
</dbReference>
<dbReference type="PANTHER" id="PTHR33569:SF1">
    <property type="entry name" value="UREASE"/>
    <property type="match status" value="1"/>
</dbReference>
<dbReference type="Pfam" id="PF00547">
    <property type="entry name" value="Urease_gamma"/>
    <property type="match status" value="1"/>
</dbReference>
<dbReference type="PIRSF" id="PIRSF001223">
    <property type="entry name" value="Urease_gamma"/>
    <property type="match status" value="1"/>
</dbReference>
<dbReference type="SUPFAM" id="SSF54111">
    <property type="entry name" value="Urease, gamma-subunit"/>
    <property type="match status" value="1"/>
</dbReference>
<name>URE3_BACC1</name>
<gene>
    <name evidence="1" type="primary">ureA</name>
    <name type="ordered locus">BCE_3664</name>
</gene>
<comment type="catalytic activity">
    <reaction evidence="1">
        <text>urea + 2 H2O + H(+) = hydrogencarbonate + 2 NH4(+)</text>
        <dbReference type="Rhea" id="RHEA:20557"/>
        <dbReference type="ChEBI" id="CHEBI:15377"/>
        <dbReference type="ChEBI" id="CHEBI:15378"/>
        <dbReference type="ChEBI" id="CHEBI:16199"/>
        <dbReference type="ChEBI" id="CHEBI:17544"/>
        <dbReference type="ChEBI" id="CHEBI:28938"/>
        <dbReference type="EC" id="3.5.1.5"/>
    </reaction>
</comment>
<comment type="pathway">
    <text evidence="1">Nitrogen metabolism; urea degradation; CO(2) and NH(3) from urea (urease route): step 1/1.</text>
</comment>
<comment type="subunit">
    <text evidence="1">Heterotrimer of UreA (gamma), UreB (beta) and UreC (alpha) subunits. Three heterotrimers associate to form the active enzyme.</text>
</comment>
<comment type="subcellular location">
    <subcellularLocation>
        <location evidence="1">Cytoplasm</location>
    </subcellularLocation>
</comment>
<comment type="similarity">
    <text evidence="1">Belongs to the urease gamma subunit family.</text>
</comment>
<accession>Q733J4</accession>
<reference key="1">
    <citation type="journal article" date="2004" name="Nucleic Acids Res.">
        <title>The genome sequence of Bacillus cereus ATCC 10987 reveals metabolic adaptations and a large plasmid related to Bacillus anthracis pXO1.</title>
        <authorList>
            <person name="Rasko D.A."/>
            <person name="Ravel J."/>
            <person name="Oekstad O.A."/>
            <person name="Helgason E."/>
            <person name="Cer R.Z."/>
            <person name="Jiang L."/>
            <person name="Shores K.A."/>
            <person name="Fouts D.E."/>
            <person name="Tourasse N.J."/>
            <person name="Angiuoli S.V."/>
            <person name="Kolonay J.F."/>
            <person name="Nelson W.C."/>
            <person name="Kolstoe A.-B."/>
            <person name="Fraser C.M."/>
            <person name="Read T.D."/>
        </authorList>
    </citation>
    <scope>NUCLEOTIDE SEQUENCE [LARGE SCALE GENOMIC DNA]</scope>
    <source>
        <strain>ATCC 10987 / NRS 248</strain>
    </source>
</reference>
<protein>
    <recommendedName>
        <fullName evidence="1">Urease subunit gamma</fullName>
        <ecNumber evidence="1">3.5.1.5</ecNumber>
    </recommendedName>
    <alternativeName>
        <fullName evidence="1">Urea amidohydrolase subunit gamma</fullName>
    </alternativeName>
</protein>
<organism>
    <name type="scientific">Bacillus cereus (strain ATCC 10987 / NRS 248)</name>
    <dbReference type="NCBI Taxonomy" id="222523"/>
    <lineage>
        <taxon>Bacteria</taxon>
        <taxon>Bacillati</taxon>
        <taxon>Bacillota</taxon>
        <taxon>Bacilli</taxon>
        <taxon>Bacillales</taxon>
        <taxon>Bacillaceae</taxon>
        <taxon>Bacillus</taxon>
        <taxon>Bacillus cereus group</taxon>
    </lineage>
</organism>
<keyword id="KW-0963">Cytoplasm</keyword>
<keyword id="KW-0378">Hydrolase</keyword>
<sequence length="100" mass="11162">MRLTPREIDKLLVVVAADLAYRRKERGLKLNYPESIAIITYEILEGARDGKNVAELMELGKNILSAEDVMDGIADMISDIQVEATFPDGTKLVTIHQPIH</sequence>
<feature type="chain" id="PRO_0000097989" description="Urease subunit gamma">
    <location>
        <begin position="1"/>
        <end position="100"/>
    </location>
</feature>
<evidence type="ECO:0000255" key="1">
    <source>
        <dbReference type="HAMAP-Rule" id="MF_00739"/>
    </source>
</evidence>
<proteinExistence type="inferred from homology"/>